<accession>P54447</accession>
<name>YQEB_BACSU</name>
<comment type="subcellular location">
    <subcellularLocation>
        <location evidence="2">Cell membrane</location>
        <topology evidence="2">Multi-pass membrane protein</topology>
    </subcellularLocation>
</comment>
<comment type="sequence caution" evidence="2">
    <conflict type="frameshift">
        <sequence resource="EMBL-CDS" id="BAA12438"/>
    </conflict>
</comment>
<keyword id="KW-1003">Cell membrane</keyword>
<keyword id="KW-0472">Membrane</keyword>
<keyword id="KW-1185">Reference proteome</keyword>
<keyword id="KW-0812">Transmembrane</keyword>
<keyword id="KW-1133">Transmembrane helix</keyword>
<sequence>MLQNQSHTLIGVTKTAVFFLYAALAIIGFAIGYFIPQIAKWALSLPWIPLEGPLRLITSFQGSTASFITALLGMCAGIWFAHSVIAMLLSVKITDHTVEFIKGKKVQTIHSDDIALVFMDHKRLVLLGTAGYELVREEIDEKPVNVEKAFRQHHYEWATDGDPFKDQFRRWIPDAPDLSQGAHALLKARHKALQDEEKDDIEEFRLELAQLGIVVRDEGTRQYWRKAETYPPKIQLGEGL</sequence>
<protein>
    <recommendedName>
        <fullName>Uncharacterized protein YqeB</fullName>
    </recommendedName>
</protein>
<feature type="chain" id="PRO_0000049782" description="Uncharacterized protein YqeB">
    <location>
        <begin position="1"/>
        <end position="240"/>
    </location>
</feature>
<feature type="transmembrane region" description="Helical" evidence="1">
    <location>
        <begin position="16"/>
        <end position="36"/>
    </location>
</feature>
<feature type="transmembrane region" description="Helical" evidence="1">
    <location>
        <begin position="67"/>
        <end position="87"/>
    </location>
</feature>
<feature type="sequence conflict" description="In Ref. 1; BAA12438." evidence="2" ref="1">
    <original>A</original>
    <variation>Q</variation>
    <location>
        <position position="65"/>
    </location>
</feature>
<reference key="1">
    <citation type="journal article" date="1996" name="Microbiology">
        <title>Systematic sequencing of the 283 kb 210 degrees-232 degrees region of the Bacillus subtilis genome containing the skin element and many sporulation genes.</title>
        <authorList>
            <person name="Mizuno M."/>
            <person name="Masuda S."/>
            <person name="Takemaru K."/>
            <person name="Hosono S."/>
            <person name="Sato T."/>
            <person name="Takeuchi M."/>
            <person name="Kobayashi Y."/>
        </authorList>
    </citation>
    <scope>NUCLEOTIDE SEQUENCE [GENOMIC DNA]</scope>
    <source>
        <strain>168 / JH642</strain>
    </source>
</reference>
<reference key="2">
    <citation type="journal article" date="1997" name="Nature">
        <title>The complete genome sequence of the Gram-positive bacterium Bacillus subtilis.</title>
        <authorList>
            <person name="Kunst F."/>
            <person name="Ogasawara N."/>
            <person name="Moszer I."/>
            <person name="Albertini A.M."/>
            <person name="Alloni G."/>
            <person name="Azevedo V."/>
            <person name="Bertero M.G."/>
            <person name="Bessieres P."/>
            <person name="Bolotin A."/>
            <person name="Borchert S."/>
            <person name="Borriss R."/>
            <person name="Boursier L."/>
            <person name="Brans A."/>
            <person name="Braun M."/>
            <person name="Brignell S.C."/>
            <person name="Bron S."/>
            <person name="Brouillet S."/>
            <person name="Bruschi C.V."/>
            <person name="Caldwell B."/>
            <person name="Capuano V."/>
            <person name="Carter N.M."/>
            <person name="Choi S.-K."/>
            <person name="Codani J.-J."/>
            <person name="Connerton I.F."/>
            <person name="Cummings N.J."/>
            <person name="Daniel R.A."/>
            <person name="Denizot F."/>
            <person name="Devine K.M."/>
            <person name="Duesterhoeft A."/>
            <person name="Ehrlich S.D."/>
            <person name="Emmerson P.T."/>
            <person name="Entian K.-D."/>
            <person name="Errington J."/>
            <person name="Fabret C."/>
            <person name="Ferrari E."/>
            <person name="Foulger D."/>
            <person name="Fritz C."/>
            <person name="Fujita M."/>
            <person name="Fujita Y."/>
            <person name="Fuma S."/>
            <person name="Galizzi A."/>
            <person name="Galleron N."/>
            <person name="Ghim S.-Y."/>
            <person name="Glaser P."/>
            <person name="Goffeau A."/>
            <person name="Golightly E.J."/>
            <person name="Grandi G."/>
            <person name="Guiseppi G."/>
            <person name="Guy B.J."/>
            <person name="Haga K."/>
            <person name="Haiech J."/>
            <person name="Harwood C.R."/>
            <person name="Henaut A."/>
            <person name="Hilbert H."/>
            <person name="Holsappel S."/>
            <person name="Hosono S."/>
            <person name="Hullo M.-F."/>
            <person name="Itaya M."/>
            <person name="Jones L.-M."/>
            <person name="Joris B."/>
            <person name="Karamata D."/>
            <person name="Kasahara Y."/>
            <person name="Klaerr-Blanchard M."/>
            <person name="Klein C."/>
            <person name="Kobayashi Y."/>
            <person name="Koetter P."/>
            <person name="Koningstein G."/>
            <person name="Krogh S."/>
            <person name="Kumano M."/>
            <person name="Kurita K."/>
            <person name="Lapidus A."/>
            <person name="Lardinois S."/>
            <person name="Lauber J."/>
            <person name="Lazarevic V."/>
            <person name="Lee S.-M."/>
            <person name="Levine A."/>
            <person name="Liu H."/>
            <person name="Masuda S."/>
            <person name="Mauel C."/>
            <person name="Medigue C."/>
            <person name="Medina N."/>
            <person name="Mellado R.P."/>
            <person name="Mizuno M."/>
            <person name="Moestl D."/>
            <person name="Nakai S."/>
            <person name="Noback M."/>
            <person name="Noone D."/>
            <person name="O'Reilly M."/>
            <person name="Ogawa K."/>
            <person name="Ogiwara A."/>
            <person name="Oudega B."/>
            <person name="Park S.-H."/>
            <person name="Parro V."/>
            <person name="Pohl T.M."/>
            <person name="Portetelle D."/>
            <person name="Porwollik S."/>
            <person name="Prescott A.M."/>
            <person name="Presecan E."/>
            <person name="Pujic P."/>
            <person name="Purnelle B."/>
            <person name="Rapoport G."/>
            <person name="Rey M."/>
            <person name="Reynolds S."/>
            <person name="Rieger M."/>
            <person name="Rivolta C."/>
            <person name="Rocha E."/>
            <person name="Roche B."/>
            <person name="Rose M."/>
            <person name="Sadaie Y."/>
            <person name="Sato T."/>
            <person name="Scanlan E."/>
            <person name="Schleich S."/>
            <person name="Schroeter R."/>
            <person name="Scoffone F."/>
            <person name="Sekiguchi J."/>
            <person name="Sekowska A."/>
            <person name="Seror S.J."/>
            <person name="Serror P."/>
            <person name="Shin B.-S."/>
            <person name="Soldo B."/>
            <person name="Sorokin A."/>
            <person name="Tacconi E."/>
            <person name="Takagi T."/>
            <person name="Takahashi H."/>
            <person name="Takemaru K."/>
            <person name="Takeuchi M."/>
            <person name="Tamakoshi A."/>
            <person name="Tanaka T."/>
            <person name="Terpstra P."/>
            <person name="Tognoni A."/>
            <person name="Tosato V."/>
            <person name="Uchiyama S."/>
            <person name="Vandenbol M."/>
            <person name="Vannier F."/>
            <person name="Vassarotti A."/>
            <person name="Viari A."/>
            <person name="Wambutt R."/>
            <person name="Wedler E."/>
            <person name="Wedler H."/>
            <person name="Weitzenegger T."/>
            <person name="Winters P."/>
            <person name="Wipat A."/>
            <person name="Yamamoto H."/>
            <person name="Yamane K."/>
            <person name="Yasumoto K."/>
            <person name="Yata K."/>
            <person name="Yoshida K."/>
            <person name="Yoshikawa H.-F."/>
            <person name="Zumstein E."/>
            <person name="Yoshikawa H."/>
            <person name="Danchin A."/>
        </authorList>
    </citation>
    <scope>NUCLEOTIDE SEQUENCE [LARGE SCALE GENOMIC DNA]</scope>
    <source>
        <strain>168</strain>
    </source>
</reference>
<reference key="3">
    <citation type="journal article" date="2009" name="Microbiology">
        <title>From a consortium sequence to a unified sequence: the Bacillus subtilis 168 reference genome a decade later.</title>
        <authorList>
            <person name="Barbe V."/>
            <person name="Cruveiller S."/>
            <person name="Kunst F."/>
            <person name="Lenoble P."/>
            <person name="Meurice G."/>
            <person name="Sekowska A."/>
            <person name="Vallenet D."/>
            <person name="Wang T."/>
            <person name="Moszer I."/>
            <person name="Medigue C."/>
            <person name="Danchin A."/>
        </authorList>
    </citation>
    <scope>SEQUENCE REVISION TO 59-93</scope>
</reference>
<gene>
    <name type="primary">yqeB</name>
    <name type="ordered locus">BSU25740</name>
</gene>
<evidence type="ECO:0000255" key="1"/>
<evidence type="ECO:0000305" key="2"/>
<proteinExistence type="predicted"/>
<dbReference type="EMBL" id="D84432">
    <property type="protein sequence ID" value="BAA12438.1"/>
    <property type="status" value="ALT_FRAME"/>
    <property type="molecule type" value="Genomic_DNA"/>
</dbReference>
<dbReference type="EMBL" id="AL009126">
    <property type="protein sequence ID" value="CAB14515.2"/>
    <property type="molecule type" value="Genomic_DNA"/>
</dbReference>
<dbReference type="PIR" id="F69950">
    <property type="entry name" value="F69950"/>
</dbReference>
<dbReference type="RefSeq" id="NP_390451.2">
    <property type="nucleotide sequence ID" value="NC_000964.3"/>
</dbReference>
<dbReference type="RefSeq" id="WP_010886572.1">
    <property type="nucleotide sequence ID" value="NZ_OZ025638.1"/>
</dbReference>
<dbReference type="SMR" id="P54447"/>
<dbReference type="FunCoup" id="P54447">
    <property type="interactions" value="5"/>
</dbReference>
<dbReference type="STRING" id="224308.BSU25740"/>
<dbReference type="PaxDb" id="224308-BSU25740"/>
<dbReference type="EnsemblBacteria" id="CAB14515">
    <property type="protein sequence ID" value="CAB14515"/>
    <property type="gene ID" value="BSU_25740"/>
</dbReference>
<dbReference type="GeneID" id="937802"/>
<dbReference type="KEGG" id="bsu:BSU25740"/>
<dbReference type="PATRIC" id="fig|224308.179.peg.2799"/>
<dbReference type="eggNOG" id="ENOG502ZBUP">
    <property type="taxonomic scope" value="Bacteria"/>
</dbReference>
<dbReference type="InParanoid" id="P54447"/>
<dbReference type="OrthoDB" id="5145029at2"/>
<dbReference type="BioCyc" id="BSUB:BSU25740-MONOMER"/>
<dbReference type="Proteomes" id="UP000001570">
    <property type="component" value="Chromosome"/>
</dbReference>
<dbReference type="GO" id="GO:0005886">
    <property type="term" value="C:plasma membrane"/>
    <property type="evidence" value="ECO:0007669"/>
    <property type="project" value="UniProtKB-SubCell"/>
</dbReference>
<dbReference type="InterPro" id="IPR056411">
    <property type="entry name" value="CysS_C"/>
</dbReference>
<dbReference type="Pfam" id="PF23494">
    <property type="entry name" value="bPH_10"/>
    <property type="match status" value="1"/>
</dbReference>
<dbReference type="Pfam" id="PF23493">
    <property type="entry name" value="CysS_C"/>
    <property type="match status" value="1"/>
</dbReference>
<organism>
    <name type="scientific">Bacillus subtilis (strain 168)</name>
    <dbReference type="NCBI Taxonomy" id="224308"/>
    <lineage>
        <taxon>Bacteria</taxon>
        <taxon>Bacillati</taxon>
        <taxon>Bacillota</taxon>
        <taxon>Bacilli</taxon>
        <taxon>Bacillales</taxon>
        <taxon>Bacillaceae</taxon>
        <taxon>Bacillus</taxon>
    </lineage>
</organism>